<organism>
    <name type="scientific">Trichophyton verrucosum (strain HKI 0517)</name>
    <dbReference type="NCBI Taxonomy" id="663202"/>
    <lineage>
        <taxon>Eukaryota</taxon>
        <taxon>Fungi</taxon>
        <taxon>Dikarya</taxon>
        <taxon>Ascomycota</taxon>
        <taxon>Pezizomycotina</taxon>
        <taxon>Eurotiomycetes</taxon>
        <taxon>Eurotiomycetidae</taxon>
        <taxon>Onygenales</taxon>
        <taxon>Arthrodermataceae</taxon>
        <taxon>Trichophyton</taxon>
    </lineage>
</organism>
<reference key="1">
    <citation type="journal article" date="2011" name="Genome Biol.">
        <title>Comparative and functional genomics provide insights into the pathogenicity of dermatophytic fungi.</title>
        <authorList>
            <person name="Burmester A."/>
            <person name="Shelest E."/>
            <person name="Gloeckner G."/>
            <person name="Heddergott C."/>
            <person name="Schindler S."/>
            <person name="Staib P."/>
            <person name="Heidel A."/>
            <person name="Felder M."/>
            <person name="Petzold A."/>
            <person name="Szafranski K."/>
            <person name="Feuermann M."/>
            <person name="Pedruzzi I."/>
            <person name="Priebe S."/>
            <person name="Groth M."/>
            <person name="Winkler R."/>
            <person name="Li W."/>
            <person name="Kniemeyer O."/>
            <person name="Schroeckh V."/>
            <person name="Hertweck C."/>
            <person name="Hube B."/>
            <person name="White T.C."/>
            <person name="Platzer M."/>
            <person name="Guthke R."/>
            <person name="Heitman J."/>
            <person name="Woestemeyer J."/>
            <person name="Zipfel P.F."/>
            <person name="Monod M."/>
            <person name="Brakhage A.A."/>
        </authorList>
    </citation>
    <scope>NUCLEOTIDE SEQUENCE [LARGE SCALE GENOMIC DNA]</scope>
    <source>
        <strain>HKI 0517</strain>
    </source>
</reference>
<evidence type="ECO:0000250" key="1"/>
<evidence type="ECO:0000255" key="2"/>
<evidence type="ECO:0000255" key="3">
    <source>
        <dbReference type="PROSITE-ProRule" id="PRU00068"/>
    </source>
</evidence>
<evidence type="ECO:0000255" key="4">
    <source>
        <dbReference type="PROSITE-ProRule" id="PRU00276"/>
    </source>
</evidence>
<evidence type="ECO:0000256" key="5">
    <source>
        <dbReference type="SAM" id="MobiDB-lite"/>
    </source>
</evidence>
<evidence type="ECO:0000305" key="6"/>
<gene>
    <name type="primary">ADM-B</name>
    <name type="ORF">TRV_04965</name>
</gene>
<comment type="function">
    <text evidence="1">Probable zinc protease.</text>
</comment>
<comment type="cofactor">
    <cofactor evidence="1">
        <name>Zn(2+)</name>
        <dbReference type="ChEBI" id="CHEBI:29105"/>
    </cofactor>
    <text evidence="1">Binds 1 zinc ion per subunit.</text>
</comment>
<comment type="subcellular location">
    <subcellularLocation>
        <location>Membrane</location>
        <topology>Single-pass type I membrane protein</topology>
    </subcellularLocation>
</comment>
<comment type="sequence caution" evidence="6">
    <conflict type="erroneous gene model prediction">
        <sequence resource="EMBL-CDS" id="EFE40271"/>
    </conflict>
</comment>
<dbReference type="EC" id="3.4.24.-"/>
<dbReference type="EMBL" id="ACYE01000253">
    <property type="protein sequence ID" value="EFE40271.1"/>
    <property type="status" value="ALT_SEQ"/>
    <property type="molecule type" value="Genomic_DNA"/>
</dbReference>
<dbReference type="RefSeq" id="XP_003020889.1">
    <property type="nucleotide sequence ID" value="XM_003020843.1"/>
</dbReference>
<dbReference type="SMR" id="D4DCV9"/>
<dbReference type="GlyCosmos" id="D4DCV9">
    <property type="glycosylation" value="5 sites, No reported glycans"/>
</dbReference>
<dbReference type="GeneID" id="9577741"/>
<dbReference type="KEGG" id="tve:TRV_04965"/>
<dbReference type="HOGENOM" id="CLU_012383_1_0_1"/>
<dbReference type="OrthoDB" id="3234at34384"/>
<dbReference type="Proteomes" id="UP000008383">
    <property type="component" value="Unassembled WGS sequence"/>
</dbReference>
<dbReference type="GO" id="GO:0016020">
    <property type="term" value="C:membrane"/>
    <property type="evidence" value="ECO:0007669"/>
    <property type="project" value="UniProtKB-SubCell"/>
</dbReference>
<dbReference type="GO" id="GO:0046872">
    <property type="term" value="F:metal ion binding"/>
    <property type="evidence" value="ECO:0007669"/>
    <property type="project" value="UniProtKB-KW"/>
</dbReference>
<dbReference type="GO" id="GO:0004222">
    <property type="term" value="F:metalloendopeptidase activity"/>
    <property type="evidence" value="ECO:0007669"/>
    <property type="project" value="InterPro"/>
</dbReference>
<dbReference type="GO" id="GO:0006508">
    <property type="term" value="P:proteolysis"/>
    <property type="evidence" value="ECO:0007669"/>
    <property type="project" value="UniProtKB-KW"/>
</dbReference>
<dbReference type="CDD" id="cd04271">
    <property type="entry name" value="ZnMc_ADAM_fungal"/>
    <property type="match status" value="1"/>
</dbReference>
<dbReference type="FunFam" id="4.10.70.10:FF:000003">
    <property type="entry name" value="Disintegrin and metalloproteinase domain-containing protein 17"/>
    <property type="match status" value="1"/>
</dbReference>
<dbReference type="Gene3D" id="3.40.1620.60">
    <property type="match status" value="1"/>
</dbReference>
<dbReference type="Gene3D" id="3.40.390.10">
    <property type="entry name" value="Collagenase (Catalytic Domain)"/>
    <property type="match status" value="1"/>
</dbReference>
<dbReference type="Gene3D" id="4.10.70.10">
    <property type="entry name" value="Disintegrin domain"/>
    <property type="match status" value="1"/>
</dbReference>
<dbReference type="InterPro" id="IPR041645">
    <property type="entry name" value="ADAMTS_CR_2"/>
</dbReference>
<dbReference type="InterPro" id="IPR001762">
    <property type="entry name" value="Disintegrin_dom"/>
</dbReference>
<dbReference type="InterPro" id="IPR036436">
    <property type="entry name" value="Disintegrin_dom_sf"/>
</dbReference>
<dbReference type="InterPro" id="IPR024079">
    <property type="entry name" value="MetalloPept_cat_dom_sf"/>
</dbReference>
<dbReference type="InterPro" id="IPR001590">
    <property type="entry name" value="Peptidase_M12B"/>
</dbReference>
<dbReference type="InterPro" id="IPR034028">
    <property type="entry name" value="ZnMc_ADAM_fungal"/>
</dbReference>
<dbReference type="PANTHER" id="PTHR11905">
    <property type="entry name" value="ADAM A DISINTEGRIN AND METALLOPROTEASE DOMAIN"/>
    <property type="match status" value="1"/>
</dbReference>
<dbReference type="PANTHER" id="PTHR11905:SF159">
    <property type="entry name" value="ADAM METALLOPROTEASE"/>
    <property type="match status" value="1"/>
</dbReference>
<dbReference type="Pfam" id="PF17771">
    <property type="entry name" value="ADAMTS_CR_2"/>
    <property type="match status" value="1"/>
</dbReference>
<dbReference type="Pfam" id="PF00200">
    <property type="entry name" value="Disintegrin"/>
    <property type="match status" value="1"/>
</dbReference>
<dbReference type="Pfam" id="PF13688">
    <property type="entry name" value="Reprolysin_5"/>
    <property type="match status" value="1"/>
</dbReference>
<dbReference type="SMART" id="SM00050">
    <property type="entry name" value="DISIN"/>
    <property type="match status" value="1"/>
</dbReference>
<dbReference type="SUPFAM" id="SSF57552">
    <property type="entry name" value="Blood coagulation inhibitor (disintegrin)"/>
    <property type="match status" value="1"/>
</dbReference>
<dbReference type="SUPFAM" id="SSF55486">
    <property type="entry name" value="Metalloproteases ('zincins'), catalytic domain"/>
    <property type="match status" value="1"/>
</dbReference>
<dbReference type="PROSITE" id="PS50215">
    <property type="entry name" value="ADAM_MEPRO"/>
    <property type="match status" value="1"/>
</dbReference>
<dbReference type="PROSITE" id="PS50214">
    <property type="entry name" value="DISINTEGRIN_2"/>
    <property type="match status" value="1"/>
</dbReference>
<name>ADMB_TRIVH</name>
<sequence length="798" mass="86572">MKAFSCLLAVIATAASLFQHVDASHARDKLNNISRVERPVIHTPSRRVHAHSHFDLTFDLYPRRNRIKLQLEPNHDVLSHNARVTFLDTEGNVDRIERIERRDHSVFKGWAWTQAKSGVWERVGWARIIMHRDGEDPLFEGVFTVMHDHHQVIAKSKYVRKRHQQDPPLDNTPGEYMLLFRGSDIAQTQSTGNVERSIMSSPSCDADTLAYDSNSNFMFPPLPEENNTSIWNYFMTSIGKRQMTDTGGVVPGSRDLKETIGSTSGCPNTRKVALIGVVADCTYTNTFASEMDARADIISVVNAASVVYEHSFNISLTLGEINILPKNCPATASSATPFNQQCDDRAGGGSFTLADRLNTFSAWRGKKTDDFAFWTLMTDCTTENQVGLAWAAQLCVKGVQGNPDSRNSSSQAVAGANVVSKTDNTWQVFAHEAGHIFGAVHDCDSMLCQNPANPDNSRCCPATASTCDARGRFMMNPTSGSQITNFSPCSIGQICSRMARRTILTNCLTTNRGVDTISGQQCGNGIVEDGEDCDCGDEESCKGNTCCDPKTCKYTSGSQCDDANEECCKGCKFASSSTICRTSSGPCDPEEKCSGNSGDCPHDIHSKDGGTCGTDLQCASGQCTSRDLQCQMHLGNQVAGSRTVAFDSYGCEVACKDPDRPNVRYEGSLTFLDGTPCGGGGTCKNGQCSGSTFGNEVSDWVSRHKPIVIGVAVGAGCLLLLAIASCICGRSRRQRPRNRKMPPINMRPMAPAYNGWNGAPPNAQQSSPGGHPPYNNIPPPINAPPPAYPGHMPPTRYA</sequence>
<proteinExistence type="inferred from homology"/>
<accession>D4DCV9</accession>
<protein>
    <recommendedName>
        <fullName>Disintegrin and metalloproteinase domain-containing protein B</fullName>
        <shortName>ADAM B</shortName>
        <ecNumber>3.4.24.-</ecNumber>
    </recommendedName>
</protein>
<keyword id="KW-1015">Disulfide bond</keyword>
<keyword id="KW-0325">Glycoprotein</keyword>
<keyword id="KW-0378">Hydrolase</keyword>
<keyword id="KW-0472">Membrane</keyword>
<keyword id="KW-0479">Metal-binding</keyword>
<keyword id="KW-0482">Metalloprotease</keyword>
<keyword id="KW-0645">Protease</keyword>
<keyword id="KW-0732">Signal</keyword>
<keyword id="KW-0812">Transmembrane</keyword>
<keyword id="KW-1133">Transmembrane helix</keyword>
<keyword id="KW-0862">Zinc</keyword>
<feature type="signal peptide" evidence="2">
    <location>
        <begin position="1"/>
        <end position="23"/>
    </location>
</feature>
<feature type="chain" id="PRO_0000397721" description="Disintegrin and metalloproteinase domain-containing protein B">
    <location>
        <begin position="24"/>
        <end position="798"/>
    </location>
</feature>
<feature type="topological domain" description="Extracellular" evidence="2">
    <location>
        <begin position="24"/>
        <end position="706"/>
    </location>
</feature>
<feature type="transmembrane region" description="Helical" evidence="2">
    <location>
        <begin position="707"/>
        <end position="727"/>
    </location>
</feature>
<feature type="topological domain" description="Cytoplasmic" evidence="2">
    <location>
        <begin position="728"/>
        <end position="798"/>
    </location>
</feature>
<feature type="domain" description="Peptidase M12B" evidence="4">
    <location>
        <begin position="271"/>
        <end position="510"/>
    </location>
</feature>
<feature type="domain" description="Disintegrin" evidence="3">
    <location>
        <begin position="519"/>
        <end position="608"/>
    </location>
</feature>
<feature type="region of interest" description="Disordered" evidence="5">
    <location>
        <begin position="734"/>
        <end position="798"/>
    </location>
</feature>
<feature type="compositionally biased region" description="Pro residues" evidence="5">
    <location>
        <begin position="775"/>
        <end position="792"/>
    </location>
</feature>
<feature type="active site" evidence="4">
    <location>
        <position position="432"/>
    </location>
</feature>
<feature type="binding site" evidence="4">
    <location>
        <position position="431"/>
    </location>
    <ligand>
        <name>Zn(2+)</name>
        <dbReference type="ChEBI" id="CHEBI:29105"/>
        <note>catalytic</note>
    </ligand>
</feature>
<feature type="binding site" evidence="4">
    <location>
        <position position="435"/>
    </location>
    <ligand>
        <name>Zn(2+)</name>
        <dbReference type="ChEBI" id="CHEBI:29105"/>
        <note>catalytic</note>
    </ligand>
</feature>
<feature type="binding site" evidence="4">
    <location>
        <position position="441"/>
    </location>
    <ligand>
        <name>Zn(2+)</name>
        <dbReference type="ChEBI" id="CHEBI:29105"/>
        <note>catalytic</note>
    </ligand>
</feature>
<feature type="glycosylation site" description="N-linked (GlcNAc...) asparagine" evidence="2">
    <location>
        <position position="32"/>
    </location>
</feature>
<feature type="glycosylation site" description="N-linked (GlcNAc...) asparagine" evidence="2">
    <location>
        <position position="226"/>
    </location>
</feature>
<feature type="glycosylation site" description="N-linked (GlcNAc...) asparagine" evidence="2">
    <location>
        <position position="227"/>
    </location>
</feature>
<feature type="glycosylation site" description="N-linked (GlcNAc...) asparagine" evidence="2">
    <location>
        <position position="313"/>
    </location>
</feature>
<feature type="glycosylation site" description="N-linked (GlcNAc...) asparagine" evidence="2">
    <location>
        <position position="407"/>
    </location>
</feature>
<feature type="disulfide bond" evidence="1">
    <location>
        <begin position="395"/>
        <end position="495"/>
    </location>
</feature>
<feature type="disulfide bond" evidence="1">
    <location>
        <begin position="448"/>
        <end position="459"/>
    </location>
</feature>
<feature type="disulfide bond" evidence="1">
    <location>
        <begin position="580"/>
        <end position="600"/>
    </location>
</feature>